<proteinExistence type="evidence at protein level"/>
<organismHost>
    <name type="scientific">Homo sapiens</name>
    <name type="common">Human</name>
    <dbReference type="NCBI Taxonomy" id="9606"/>
</organismHost>
<dbReference type="EC" id="2.3.2.27"/>
<dbReference type="EMBL" id="D10471">
    <property type="protein sequence ID" value="BAA23427.1"/>
    <property type="molecule type" value="Genomic_DNA"/>
</dbReference>
<dbReference type="EMBL" id="Z86099">
    <property type="protein sequence ID" value="CAB06760.1"/>
    <property type="molecule type" value="Genomic_DNA"/>
</dbReference>
<dbReference type="PIR" id="JQ1501">
    <property type="entry name" value="EDBEXD"/>
</dbReference>
<dbReference type="SMR" id="P28284"/>
<dbReference type="Proteomes" id="UP000001874">
    <property type="component" value="Segment"/>
</dbReference>
<dbReference type="GO" id="GO:0003677">
    <property type="term" value="F:DNA binding"/>
    <property type="evidence" value="ECO:0007669"/>
    <property type="project" value="UniProtKB-KW"/>
</dbReference>
<dbReference type="GO" id="GO:0061630">
    <property type="term" value="F:ubiquitin protein ligase activity"/>
    <property type="evidence" value="ECO:0007669"/>
    <property type="project" value="TreeGrafter"/>
</dbReference>
<dbReference type="GO" id="GO:0008270">
    <property type="term" value="F:zinc ion binding"/>
    <property type="evidence" value="ECO:0007669"/>
    <property type="project" value="UniProtKB-KW"/>
</dbReference>
<dbReference type="GO" id="GO:0006513">
    <property type="term" value="P:protein monoubiquitination"/>
    <property type="evidence" value="ECO:0007669"/>
    <property type="project" value="TreeGrafter"/>
</dbReference>
<dbReference type="GO" id="GO:0000209">
    <property type="term" value="P:protein polyubiquitination"/>
    <property type="evidence" value="ECO:0007669"/>
    <property type="project" value="TreeGrafter"/>
</dbReference>
<dbReference type="GO" id="GO:0075342">
    <property type="term" value="P:symbiont-mediated disruption of host cell PML body"/>
    <property type="evidence" value="ECO:0000314"/>
    <property type="project" value="UniProtKB"/>
</dbReference>
<dbReference type="GO" id="GO:0039593">
    <property type="term" value="P:symbiont-mediated perturbation of host exit from mitosis"/>
    <property type="evidence" value="ECO:0007669"/>
    <property type="project" value="UniProtKB-KW"/>
</dbReference>
<dbReference type="GO" id="GO:0039648">
    <property type="term" value="P:symbiont-mediated perturbation of host ubiquitin-like protein modification"/>
    <property type="evidence" value="ECO:0007669"/>
    <property type="project" value="UniProtKB-KW"/>
</dbReference>
<dbReference type="GO" id="GO:0039548">
    <property type="term" value="P:symbiont-mediated suppression of host cytoplasmic pattern recognition receptor signaling pathway via inhibition of IRF3 activity"/>
    <property type="evidence" value="ECO:0007669"/>
    <property type="project" value="UniProtKB-KW"/>
</dbReference>
<dbReference type="CDD" id="cd23130">
    <property type="entry name" value="RING-HC_EHV1-like"/>
    <property type="match status" value="1"/>
</dbReference>
<dbReference type="Gene3D" id="3.30.40.10">
    <property type="entry name" value="Zinc/RING finger domain, C3HC4 (zinc finger)"/>
    <property type="match status" value="1"/>
</dbReference>
<dbReference type="InterPro" id="IPR018957">
    <property type="entry name" value="Znf_C3HC4_RING-type"/>
</dbReference>
<dbReference type="InterPro" id="IPR001841">
    <property type="entry name" value="Znf_RING"/>
</dbReference>
<dbReference type="InterPro" id="IPR013083">
    <property type="entry name" value="Znf_RING/FYVE/PHD"/>
</dbReference>
<dbReference type="InterPro" id="IPR017907">
    <property type="entry name" value="Znf_RING_CS"/>
</dbReference>
<dbReference type="PANTHER" id="PTHR46077">
    <property type="entry name" value="E3 UBIQUITIN-PROTEIN LIGASE TOPORS"/>
    <property type="match status" value="1"/>
</dbReference>
<dbReference type="PANTHER" id="PTHR46077:SF1">
    <property type="entry name" value="TOP1 BINDING ARGININE_SERINE RICH PROTEIN, E3 UBIQUITIN LIGASE"/>
    <property type="match status" value="1"/>
</dbReference>
<dbReference type="Pfam" id="PF00097">
    <property type="entry name" value="zf-C3HC4"/>
    <property type="match status" value="1"/>
</dbReference>
<dbReference type="SMART" id="SM00184">
    <property type="entry name" value="RING"/>
    <property type="match status" value="1"/>
</dbReference>
<dbReference type="SUPFAM" id="SSF57850">
    <property type="entry name" value="RING/U-box"/>
    <property type="match status" value="1"/>
</dbReference>
<dbReference type="PROSITE" id="PS00518">
    <property type="entry name" value="ZF_RING_1"/>
    <property type="match status" value="1"/>
</dbReference>
<dbReference type="PROSITE" id="PS50089">
    <property type="entry name" value="ZF_RING_2"/>
    <property type="match status" value="1"/>
</dbReference>
<protein>
    <recommendedName>
        <fullName>E3 ubiquitin-protein ligase ICP0</fullName>
        <ecNumber>2.3.2.27</ecNumber>
    </recommendedName>
    <alternativeName>
        <fullName evidence="5">RING-type E3 ubiquitin transferaseICP0</fullName>
    </alternativeName>
    <alternativeName>
        <fullName>VMW118 protein</fullName>
    </alternativeName>
</protein>
<keyword id="KW-0010">Activator</keyword>
<keyword id="KW-0238">DNA-binding</keyword>
<keyword id="KW-0945">Host-virus interaction</keyword>
<keyword id="KW-1090">Inhibition of host innate immune response by virus</keyword>
<keyword id="KW-1092">Inhibition of host IRF3 by virus</keyword>
<keyword id="KW-1098">Inhibition of host mitotic exit by virus</keyword>
<keyword id="KW-1113">Inhibition of host RLR pathway by virus</keyword>
<keyword id="KW-0479">Metal-binding</keyword>
<keyword id="KW-1121">Modulation of host cell cycle by virus</keyword>
<keyword id="KW-1128">Modulation of host ubiquitin pathway by viral E3 ligase</keyword>
<keyword id="KW-1130">Modulation of host ubiquitin pathway by virus</keyword>
<keyword id="KW-1185">Reference proteome</keyword>
<keyword id="KW-0678">Repressor</keyword>
<keyword id="KW-0804">Transcription</keyword>
<keyword id="KW-0805">Transcription regulation</keyword>
<keyword id="KW-0808">Transferase</keyword>
<keyword id="KW-0832">Ubl conjugation</keyword>
<keyword id="KW-0899">Viral immunoevasion</keyword>
<keyword id="KW-0862">Zinc</keyword>
<keyword id="KW-0863">Zinc-finger</keyword>
<sequence>MEPRPGTSSRADPGPERPPRQTPGTQPAAPHAWGMLNDMQWLASSDSEEETEVGISDDDLHRDSTSEAGSTDTEMFEAGLMDAATPPARPPAERQGSPTPADAQGSCGGGPVGEEEAEAGGGGDVCAVCTDEIAPPLRCQSFPCLHPFCIPCMKTWIPLRNTCPLCNTPVAYLIVGVTASGSFSTIPIVNDPRTRVEAEAAVRAGTAVDFIWTGNPRTAPRSLSLGGHTVRALSPTPPWPGTDDEDDDLADVDYVPPAPRRAPRRGGGGAGATRGTSQPAATRPAPPGAPRSSSSGGAPLRAGVGSGSGGGPAVAAVVPRVASLPPAAGGGRAQARRVGEDAAAAEGRTPPARQPRAAQEPPIVISDSPPPSPRRPAGPGPLSFVSSSSAQVSSGPGGGGLPQSSGRAARPRAAVAPRVRSPPRAAAAPVVSASADAAGPAPPAVPVDAHRAPRSRMTQAQTDTQAQSLGRAGATDARGSGGPGAEGGPGVPRGTNTPGAAPHAAEGAAARPRKRRGSDSGPAASSSASSSAAPRSPLAPQGVGAKRAAPRRAPDSDSGDRGHGPLAPASAGAAPPSASPSSQAAVAAASSSSASSSSASSSSASSSSASSSSASSSSASSSSASSSAGGAGGSVASASGAGERRETSLGPRAAAPRGPRKCARKTRHAEGGPEPGARDPAPGLTRYLPIAGVSSVVALAPYVNKTVTGDCLPVLDMETGHIGAYVVLVDQTGNVADLLRAAAPAWSRRTLLPEHARNCVRPPDYPTPPASEWNSLWMTPVGNMLFDQGTLVGALDFHGLRSRHPWSREQGAPAPAGDAPAGHGE</sequence>
<evidence type="ECO:0000250" key="1"/>
<evidence type="ECO:0000255" key="2">
    <source>
        <dbReference type="PROSITE-ProRule" id="PRU00175"/>
    </source>
</evidence>
<evidence type="ECO:0000256" key="3">
    <source>
        <dbReference type="SAM" id="MobiDB-lite"/>
    </source>
</evidence>
<evidence type="ECO:0000269" key="4">
    <source>
    </source>
</evidence>
<evidence type="ECO:0000305" key="5"/>
<gene>
    <name type="primary">RL2</name>
</gene>
<organism>
    <name type="scientific">Human herpesvirus 2 (strain HG52)</name>
    <name type="common">HHV-2</name>
    <name type="synonym">Human herpes simplex virus 2</name>
    <dbReference type="NCBI Taxonomy" id="10315"/>
    <lineage>
        <taxon>Viruses</taxon>
        <taxon>Duplodnaviria</taxon>
        <taxon>Heunggongvirae</taxon>
        <taxon>Peploviricota</taxon>
        <taxon>Herviviricetes</taxon>
        <taxon>Herpesvirales</taxon>
        <taxon>Orthoherpesviridae</taxon>
        <taxon>Alphaherpesvirinae</taxon>
        <taxon>Simplexvirus</taxon>
        <taxon>Simplexvirus humanalpha2</taxon>
        <taxon>Human herpesvirus 2</taxon>
    </lineage>
</organism>
<name>ICP0_HHV2H</name>
<reference key="1">
    <citation type="journal article" date="1991" name="J. Gen. Virol.">
        <title>Comparative sequence analysis of the long repeat regions and adjoining parts of the long unique regions in the genomes of herpes simplex viruses types 1 and 2.</title>
        <authorList>
            <person name="McGeoch D.J."/>
            <person name="Cunningham C."/>
            <person name="McIntyre G."/>
            <person name="Dolan A."/>
        </authorList>
    </citation>
    <scope>NUCLEOTIDE SEQUENCE [GENOMIC DNA]</scope>
</reference>
<reference key="2">
    <citation type="submission" date="1997-02" db="EMBL/GenBank/DDBJ databases">
        <authorList>
            <person name="Dolan A."/>
        </authorList>
    </citation>
    <scope>NUCLEOTIDE SEQUENCE [GENOMIC DNA]</scope>
</reference>
<reference key="3">
    <citation type="journal article" date="2010" name="J. Virol.">
        <title>Comparison of the biological and biochemical activities of several members of the alphaherpesvirus ICP0 family of proteins.</title>
        <authorList>
            <person name="Everett R.D."/>
            <person name="Boutell C."/>
            <person name="McNair C."/>
            <person name="Grant L."/>
            <person name="Orr A."/>
        </authorList>
    </citation>
    <scope>FUNCTION IN IMMUNE EVASION</scope>
</reference>
<feature type="chain" id="PRO_0000056353" description="E3 ubiquitin-protein ligase ICP0">
    <location>
        <begin position="1"/>
        <end position="825"/>
    </location>
</feature>
<feature type="zinc finger region" description="RING-type" evidence="2">
    <location>
        <begin position="126"/>
        <end position="167"/>
    </location>
</feature>
<feature type="region of interest" description="Disordered" evidence="3">
    <location>
        <begin position="1"/>
        <end position="121"/>
    </location>
</feature>
<feature type="region of interest" description="Disordered" evidence="3">
    <location>
        <begin position="221"/>
        <end position="312"/>
    </location>
</feature>
<feature type="region of interest" description="Disordered" evidence="3">
    <location>
        <begin position="325"/>
        <end position="683"/>
    </location>
</feature>
<feature type="region of interest" description="Disordered" evidence="3">
    <location>
        <begin position="803"/>
        <end position="825"/>
    </location>
</feature>
<feature type="compositionally biased region" description="Polar residues" evidence="3">
    <location>
        <begin position="1"/>
        <end position="10"/>
    </location>
</feature>
<feature type="compositionally biased region" description="Acidic residues" evidence="3">
    <location>
        <begin position="46"/>
        <end position="57"/>
    </location>
</feature>
<feature type="compositionally biased region" description="Acidic residues" evidence="3">
    <location>
        <begin position="242"/>
        <end position="251"/>
    </location>
</feature>
<feature type="compositionally biased region" description="Low complexity" evidence="3">
    <location>
        <begin position="273"/>
        <end position="283"/>
    </location>
</feature>
<feature type="compositionally biased region" description="Low complexity" evidence="3">
    <location>
        <begin position="290"/>
        <end position="303"/>
    </location>
</feature>
<feature type="compositionally biased region" description="Low complexity" evidence="3">
    <location>
        <begin position="350"/>
        <end position="367"/>
    </location>
</feature>
<feature type="compositionally biased region" description="Pro residues" evidence="3">
    <location>
        <begin position="368"/>
        <end position="379"/>
    </location>
</feature>
<feature type="compositionally biased region" description="Low complexity" evidence="3">
    <location>
        <begin position="380"/>
        <end position="394"/>
    </location>
</feature>
<feature type="compositionally biased region" description="Low complexity" evidence="3">
    <location>
        <begin position="402"/>
        <end position="439"/>
    </location>
</feature>
<feature type="compositionally biased region" description="Polar residues" evidence="3">
    <location>
        <begin position="456"/>
        <end position="468"/>
    </location>
</feature>
<feature type="compositionally biased region" description="Gly residues" evidence="3">
    <location>
        <begin position="479"/>
        <end position="491"/>
    </location>
</feature>
<feature type="compositionally biased region" description="Low complexity" evidence="3">
    <location>
        <begin position="492"/>
        <end position="510"/>
    </location>
</feature>
<feature type="compositionally biased region" description="Low complexity" evidence="3">
    <location>
        <begin position="519"/>
        <end position="540"/>
    </location>
</feature>
<feature type="compositionally biased region" description="Basic and acidic residues" evidence="3">
    <location>
        <begin position="552"/>
        <end position="563"/>
    </location>
</feature>
<feature type="compositionally biased region" description="Low complexity" evidence="3">
    <location>
        <begin position="567"/>
        <end position="641"/>
    </location>
</feature>
<feature type="compositionally biased region" description="Basic residues" evidence="3">
    <location>
        <begin position="658"/>
        <end position="667"/>
    </location>
</feature>
<feature type="compositionally biased region" description="Low complexity" evidence="3">
    <location>
        <begin position="811"/>
        <end position="825"/>
    </location>
</feature>
<accession>P28284</accession>
<comment type="function">
    <text evidence="4">Evades nuclear antiviral defenses triggered by dsDNA viruses. Acts during the initial stages of lytic infection and the reactivation of latent viral genome. Prevents the antiviral effect of nuclear bodies by degrading host PML and SP100. Prevents antiviral response to viral DNA induced by IFI16 by degrading it. Additionally, inhibits host IRF3 nuclear signaling to prevent interferon production by the infected cells.</text>
</comment>
<comment type="catalytic activity">
    <reaction>
        <text>S-ubiquitinyl-[E2 ubiquitin-conjugating enzyme]-L-cysteine + [acceptor protein]-L-lysine = [E2 ubiquitin-conjugating enzyme]-L-cysteine + N(6)-ubiquitinyl-[acceptor protein]-L-lysine.</text>
        <dbReference type="EC" id="2.3.2.27"/>
    </reaction>
</comment>
<comment type="PTM">
    <text evidence="1">Auto-ubiquitinated.</text>
</comment>